<feature type="chain" id="PRO_0000155137" description="Protein SEY1">
    <location>
        <begin position="1"/>
        <end position="845"/>
    </location>
</feature>
<feature type="topological domain" description="Cytoplasmic" evidence="1">
    <location>
        <begin position="1"/>
        <end position="749"/>
    </location>
</feature>
<feature type="transmembrane region" description="Helical" evidence="1">
    <location>
        <begin position="750"/>
        <end position="770"/>
    </location>
</feature>
<feature type="topological domain" description="Lumenal" evidence="1">
    <location>
        <begin position="771"/>
        <end position="773"/>
    </location>
</feature>
<feature type="transmembrane region" description="Helical" evidence="1">
    <location>
        <begin position="774"/>
        <end position="794"/>
    </location>
</feature>
<feature type="topological domain" description="Cytoplasmic" evidence="1">
    <location>
        <begin position="795"/>
        <end position="845"/>
    </location>
</feature>
<feature type="domain" description="GB1/RHD3-type G" evidence="2">
    <location>
        <begin position="112"/>
        <end position="334"/>
    </location>
</feature>
<feature type="region of interest" description="Disordered" evidence="3">
    <location>
        <begin position="823"/>
        <end position="845"/>
    </location>
</feature>
<feature type="coiled-coil region" evidence="1">
    <location>
        <begin position="1"/>
        <end position="29"/>
    </location>
</feature>
<feature type="compositionally biased region" description="Basic and acidic residues" evidence="3">
    <location>
        <begin position="826"/>
        <end position="838"/>
    </location>
</feature>
<feature type="binding site" evidence="1">
    <location>
        <begin position="122"/>
        <end position="129"/>
    </location>
    <ligand>
        <name>GTP</name>
        <dbReference type="ChEBI" id="CHEBI:37565"/>
    </ligand>
</feature>
<protein>
    <recommendedName>
        <fullName evidence="1">Protein SEY1</fullName>
        <ecNumber evidence="1">3.6.5.-</ecNumber>
    </recommendedName>
</protein>
<dbReference type="EC" id="3.6.5.-" evidence="1"/>
<dbReference type="EMBL" id="CM003141">
    <property type="protein sequence ID" value="KIS71518.1"/>
    <property type="molecule type" value="Genomic_DNA"/>
</dbReference>
<dbReference type="RefSeq" id="XP_011387503.1">
    <property type="nucleotide sequence ID" value="XM_011389201.1"/>
</dbReference>
<dbReference type="SMR" id="Q4PEQ0"/>
<dbReference type="FunCoup" id="Q4PEQ0">
    <property type="interactions" value="129"/>
</dbReference>
<dbReference type="STRING" id="237631.Q4PEQ0"/>
<dbReference type="EnsemblFungi" id="KIS71518">
    <property type="protein sequence ID" value="KIS71518"/>
    <property type="gene ID" value="UMAG_12136"/>
</dbReference>
<dbReference type="GeneID" id="23567897"/>
<dbReference type="KEGG" id="uma:UMAG_12136"/>
<dbReference type="VEuPathDB" id="FungiDB:UMAG_12136"/>
<dbReference type="eggNOG" id="KOG2203">
    <property type="taxonomic scope" value="Eukaryota"/>
</dbReference>
<dbReference type="InParanoid" id="Q4PEQ0"/>
<dbReference type="OrthoDB" id="1597724at2759"/>
<dbReference type="Proteomes" id="UP000000561">
    <property type="component" value="Chromosome 2"/>
</dbReference>
<dbReference type="GO" id="GO:0005783">
    <property type="term" value="C:endoplasmic reticulum"/>
    <property type="evidence" value="ECO:0000318"/>
    <property type="project" value="GO_Central"/>
</dbReference>
<dbReference type="GO" id="GO:0005789">
    <property type="term" value="C:endoplasmic reticulum membrane"/>
    <property type="evidence" value="ECO:0007669"/>
    <property type="project" value="UniProtKB-SubCell"/>
</dbReference>
<dbReference type="GO" id="GO:0005525">
    <property type="term" value="F:GTP binding"/>
    <property type="evidence" value="ECO:0007669"/>
    <property type="project" value="UniProtKB-UniRule"/>
</dbReference>
<dbReference type="GO" id="GO:0003924">
    <property type="term" value="F:GTPase activity"/>
    <property type="evidence" value="ECO:0000318"/>
    <property type="project" value="GO_Central"/>
</dbReference>
<dbReference type="GO" id="GO:0016320">
    <property type="term" value="P:endoplasmic reticulum membrane fusion"/>
    <property type="evidence" value="ECO:0000318"/>
    <property type="project" value="GO_Central"/>
</dbReference>
<dbReference type="CDD" id="cd01851">
    <property type="entry name" value="GBP"/>
    <property type="match status" value="1"/>
</dbReference>
<dbReference type="FunFam" id="3.40.50.300:FF:000727">
    <property type="entry name" value="Protein SEY1 homolog"/>
    <property type="match status" value="1"/>
</dbReference>
<dbReference type="Gene3D" id="3.40.50.300">
    <property type="entry name" value="P-loop containing nucleotide triphosphate hydrolases"/>
    <property type="match status" value="1"/>
</dbReference>
<dbReference type="HAMAP" id="MF_03109">
    <property type="entry name" value="Sey1"/>
    <property type="match status" value="1"/>
</dbReference>
<dbReference type="InterPro" id="IPR030386">
    <property type="entry name" value="G_GB1_RHD3_dom"/>
</dbReference>
<dbReference type="InterPro" id="IPR027417">
    <property type="entry name" value="P-loop_NTPase"/>
</dbReference>
<dbReference type="InterPro" id="IPR008803">
    <property type="entry name" value="RHD3/Sey1"/>
</dbReference>
<dbReference type="InterPro" id="IPR046758">
    <property type="entry name" value="Sey1/RHD3-like_3HB"/>
</dbReference>
<dbReference type="PANTHER" id="PTHR45923">
    <property type="entry name" value="PROTEIN SEY1"/>
    <property type="match status" value="1"/>
</dbReference>
<dbReference type="PANTHER" id="PTHR45923:SF2">
    <property type="entry name" value="PROTEIN SEY1"/>
    <property type="match status" value="1"/>
</dbReference>
<dbReference type="Pfam" id="PF05879">
    <property type="entry name" value="RHD3_GTPase"/>
    <property type="match status" value="1"/>
</dbReference>
<dbReference type="Pfam" id="PF20428">
    <property type="entry name" value="Sey1_3HB"/>
    <property type="match status" value="1"/>
</dbReference>
<dbReference type="SUPFAM" id="SSF52540">
    <property type="entry name" value="P-loop containing nucleoside triphosphate hydrolases"/>
    <property type="match status" value="1"/>
</dbReference>
<dbReference type="PROSITE" id="PS51715">
    <property type="entry name" value="G_GB1_RHD3"/>
    <property type="match status" value="1"/>
</dbReference>
<accession>Q4PEQ0</accession>
<accession>A0A0D1CZ41</accession>
<keyword id="KW-0175">Coiled coil</keyword>
<keyword id="KW-0256">Endoplasmic reticulum</keyword>
<keyword id="KW-0342">GTP-binding</keyword>
<keyword id="KW-0378">Hydrolase</keyword>
<keyword id="KW-0472">Membrane</keyword>
<keyword id="KW-0547">Nucleotide-binding</keyword>
<keyword id="KW-1185">Reference proteome</keyword>
<keyword id="KW-0812">Transmembrane</keyword>
<keyword id="KW-1133">Transmembrane helix</keyword>
<name>SEY1_MYCMD</name>
<proteinExistence type="inferred from homology"/>
<comment type="function">
    <text evidence="1">Cooperates with the reticulon proteins and tubule-shaping DP1 family proteins to generate and maintain the structure of the tubular endoplasmic reticulum network. Has GTPase activity, which is required for its function in ER organization.</text>
</comment>
<comment type="subcellular location">
    <subcellularLocation>
        <location evidence="1">Endoplasmic reticulum membrane</location>
        <topology evidence="1">Multi-pass membrane protein</topology>
    </subcellularLocation>
    <text evidence="1">Enriched in the cortical ER. Concentrated in punctae along the ER tubules.</text>
</comment>
<comment type="similarity">
    <text evidence="2">Belongs to the TRAFAC class dynamin-like GTPase superfamily. GB1/RHD3 GTPase family. RHD3 subfamily.</text>
</comment>
<organism>
    <name type="scientific">Mycosarcoma maydis</name>
    <name type="common">Corn smut fungus</name>
    <name type="synonym">Ustilago maydis</name>
    <dbReference type="NCBI Taxonomy" id="5270"/>
    <lineage>
        <taxon>Eukaryota</taxon>
        <taxon>Fungi</taxon>
        <taxon>Dikarya</taxon>
        <taxon>Basidiomycota</taxon>
        <taxon>Ustilaginomycotina</taxon>
        <taxon>Ustilaginomycetes</taxon>
        <taxon>Ustilaginales</taxon>
        <taxon>Ustilaginaceae</taxon>
        <taxon>Mycosarcoma</taxon>
    </lineage>
</organism>
<evidence type="ECO:0000255" key="1">
    <source>
        <dbReference type="HAMAP-Rule" id="MF_03109"/>
    </source>
</evidence>
<evidence type="ECO:0000255" key="2">
    <source>
        <dbReference type="PROSITE-ProRule" id="PRU01052"/>
    </source>
</evidence>
<evidence type="ECO:0000256" key="3">
    <source>
        <dbReference type="SAM" id="MobiDB-lite"/>
    </source>
</evidence>
<gene>
    <name evidence="1" type="primary">SEY1</name>
    <name type="ORF">UMAG_12136</name>
</gene>
<sequence>MELNVDSAKQLLAEHEQELQSAHDAHSILLASQPITAATTHPNATASNAARAVPVVAPSSVPTPTAASTPFISTQPPAPAQTGRMQLIDEQQKFNSADFSPHLENWGLADAGFGYDLCAVLGSQSTGKSTLLNKLFGTNFDVMSESARQQTTKGIWMCKGLKMNVLVMDVEGTDGRERGEDQDFERKSALFSMASAEVLIVNLWEHQVGLYQGANMGLLKTVFEVNLGLFQASRAKTAGAKDKTLLLFVIRDHIGVTPLENLSATIMADLTKIWHSLSKPQGLELSKITDFFDFMFTTLPHKILQPAEFDKAVDVLRNRFVNPKDPNFVFKTEYHKRIPADGLAHYLESIWEQVMTNKDLDLPTQQELLAQFRCDEIANVAFAHFATSIKDFRKHIEGGSVVESLGADMALHRSTALSKFDRDASRYHQEVYKRKRIDLLDKLNGSLSPFFLGQLKNLHRLMLQSFKQAVLDRMRTEPNYDFGEVVSSEKRTALAKFSAAAQAVLLTDTDWTIDDEVVELDVEIQSISDTMRVEETKKMVAQIERTFNKNIGEPVELALKSAKRSMWDEVLISFSTLLEQAEATYVRKATSFNCTDDENEHALLALRRKSWMSMRAKVDEQTADSVIAAKLRNSFEDGFRYDDAGVPRVWKPEDDMDGAFRKARDETLELIALYAKIQAVDTTLMRELRSKFEDAEPVGLVVEDEAFDWHATLSVLSETRKNDIGMRFRKEADAMYVEAKRATVSSIAQVPLWMYGVMLVLGWNELMAILSSPVYFAFLLVLIASAYIVWRLNLSGPLISVLRAVANEVHRLADAQLRTHFSQPLREPRPPAESRPAEQIELEPN</sequence>
<reference key="1">
    <citation type="journal article" date="2006" name="Nature">
        <title>Insights from the genome of the biotrophic fungal plant pathogen Ustilago maydis.</title>
        <authorList>
            <person name="Kaemper J."/>
            <person name="Kahmann R."/>
            <person name="Boelker M."/>
            <person name="Ma L.-J."/>
            <person name="Brefort T."/>
            <person name="Saville B.J."/>
            <person name="Banuett F."/>
            <person name="Kronstad J.W."/>
            <person name="Gold S.E."/>
            <person name="Mueller O."/>
            <person name="Perlin M.H."/>
            <person name="Woesten H.A.B."/>
            <person name="de Vries R."/>
            <person name="Ruiz-Herrera J."/>
            <person name="Reynaga-Pena C.G."/>
            <person name="Snetselaar K."/>
            <person name="McCann M."/>
            <person name="Perez-Martin J."/>
            <person name="Feldbruegge M."/>
            <person name="Basse C.W."/>
            <person name="Steinberg G."/>
            <person name="Ibeas J.I."/>
            <person name="Holloman W."/>
            <person name="Guzman P."/>
            <person name="Farman M.L."/>
            <person name="Stajich J.E."/>
            <person name="Sentandreu R."/>
            <person name="Gonzalez-Prieto J.M."/>
            <person name="Kennell J.C."/>
            <person name="Molina L."/>
            <person name="Schirawski J."/>
            <person name="Mendoza-Mendoza A."/>
            <person name="Greilinger D."/>
            <person name="Muench K."/>
            <person name="Roessel N."/>
            <person name="Scherer M."/>
            <person name="Vranes M."/>
            <person name="Ladendorf O."/>
            <person name="Vincon V."/>
            <person name="Fuchs U."/>
            <person name="Sandrock B."/>
            <person name="Meng S."/>
            <person name="Ho E.C.H."/>
            <person name="Cahill M.J."/>
            <person name="Boyce K.J."/>
            <person name="Klose J."/>
            <person name="Klosterman S.J."/>
            <person name="Deelstra H.J."/>
            <person name="Ortiz-Castellanos L."/>
            <person name="Li W."/>
            <person name="Sanchez-Alonso P."/>
            <person name="Schreier P.H."/>
            <person name="Haeuser-Hahn I."/>
            <person name="Vaupel M."/>
            <person name="Koopmann E."/>
            <person name="Friedrich G."/>
            <person name="Voss H."/>
            <person name="Schlueter T."/>
            <person name="Margolis J."/>
            <person name="Platt D."/>
            <person name="Swimmer C."/>
            <person name="Gnirke A."/>
            <person name="Chen F."/>
            <person name="Vysotskaia V."/>
            <person name="Mannhaupt G."/>
            <person name="Gueldener U."/>
            <person name="Muensterkoetter M."/>
            <person name="Haase D."/>
            <person name="Oesterheld M."/>
            <person name="Mewes H.-W."/>
            <person name="Mauceli E.W."/>
            <person name="DeCaprio D."/>
            <person name="Wade C.M."/>
            <person name="Butler J."/>
            <person name="Young S.K."/>
            <person name="Jaffe D.B."/>
            <person name="Calvo S.E."/>
            <person name="Nusbaum C."/>
            <person name="Galagan J.E."/>
            <person name="Birren B.W."/>
        </authorList>
    </citation>
    <scope>NUCLEOTIDE SEQUENCE [LARGE SCALE GENOMIC DNA]</scope>
    <source>
        <strain>DSM 14603 / FGSC 9021 / UM521</strain>
    </source>
</reference>
<reference key="2">
    <citation type="submission" date="2014-09" db="EMBL/GenBank/DDBJ databases">
        <authorList>
            <person name="Gueldener U."/>
            <person name="Muensterkoetter M."/>
            <person name="Walter M.C."/>
            <person name="Mannhaupt G."/>
            <person name="Kahmann R."/>
        </authorList>
    </citation>
    <scope>GENOME REANNOTATION</scope>
    <source>
        <strain>DSM 14603 / FGSC 9021 / UM521</strain>
    </source>
</reference>